<accession>B5ELX9</accession>
<dbReference type="EMBL" id="CP001132">
    <property type="protein sequence ID" value="ACH82751.1"/>
    <property type="molecule type" value="Genomic_DNA"/>
</dbReference>
<dbReference type="RefSeq" id="WP_009565431.1">
    <property type="nucleotide sequence ID" value="NC_011206.1"/>
</dbReference>
<dbReference type="SMR" id="B5ELX9"/>
<dbReference type="GeneID" id="65279706"/>
<dbReference type="KEGG" id="afe:Lferr_0497"/>
<dbReference type="eggNOG" id="COG0087">
    <property type="taxonomic scope" value="Bacteria"/>
</dbReference>
<dbReference type="HOGENOM" id="CLU_044142_4_1_6"/>
<dbReference type="GO" id="GO:0022625">
    <property type="term" value="C:cytosolic large ribosomal subunit"/>
    <property type="evidence" value="ECO:0007669"/>
    <property type="project" value="TreeGrafter"/>
</dbReference>
<dbReference type="GO" id="GO:0019843">
    <property type="term" value="F:rRNA binding"/>
    <property type="evidence" value="ECO:0007669"/>
    <property type="project" value="UniProtKB-UniRule"/>
</dbReference>
<dbReference type="GO" id="GO:0003735">
    <property type="term" value="F:structural constituent of ribosome"/>
    <property type="evidence" value="ECO:0007669"/>
    <property type="project" value="InterPro"/>
</dbReference>
<dbReference type="GO" id="GO:0006412">
    <property type="term" value="P:translation"/>
    <property type="evidence" value="ECO:0007669"/>
    <property type="project" value="UniProtKB-UniRule"/>
</dbReference>
<dbReference type="FunFam" id="2.40.30.10:FF:000004">
    <property type="entry name" value="50S ribosomal protein L3"/>
    <property type="match status" value="1"/>
</dbReference>
<dbReference type="FunFam" id="3.30.160.810:FF:000001">
    <property type="entry name" value="50S ribosomal protein L3"/>
    <property type="match status" value="1"/>
</dbReference>
<dbReference type="Gene3D" id="3.30.160.810">
    <property type="match status" value="1"/>
</dbReference>
<dbReference type="Gene3D" id="2.40.30.10">
    <property type="entry name" value="Translation factors"/>
    <property type="match status" value="1"/>
</dbReference>
<dbReference type="HAMAP" id="MF_01325_B">
    <property type="entry name" value="Ribosomal_uL3_B"/>
    <property type="match status" value="1"/>
</dbReference>
<dbReference type="InterPro" id="IPR000597">
    <property type="entry name" value="Ribosomal_uL3"/>
</dbReference>
<dbReference type="InterPro" id="IPR019927">
    <property type="entry name" value="Ribosomal_uL3_bac/org-type"/>
</dbReference>
<dbReference type="InterPro" id="IPR019926">
    <property type="entry name" value="Ribosomal_uL3_CS"/>
</dbReference>
<dbReference type="InterPro" id="IPR009000">
    <property type="entry name" value="Transl_B-barrel_sf"/>
</dbReference>
<dbReference type="NCBIfam" id="TIGR03625">
    <property type="entry name" value="L3_bact"/>
    <property type="match status" value="1"/>
</dbReference>
<dbReference type="PANTHER" id="PTHR11229">
    <property type="entry name" value="50S RIBOSOMAL PROTEIN L3"/>
    <property type="match status" value="1"/>
</dbReference>
<dbReference type="PANTHER" id="PTHR11229:SF16">
    <property type="entry name" value="LARGE RIBOSOMAL SUBUNIT PROTEIN UL3C"/>
    <property type="match status" value="1"/>
</dbReference>
<dbReference type="Pfam" id="PF00297">
    <property type="entry name" value="Ribosomal_L3"/>
    <property type="match status" value="1"/>
</dbReference>
<dbReference type="SUPFAM" id="SSF50447">
    <property type="entry name" value="Translation proteins"/>
    <property type="match status" value="1"/>
</dbReference>
<dbReference type="PROSITE" id="PS00474">
    <property type="entry name" value="RIBOSOMAL_L3"/>
    <property type="match status" value="1"/>
</dbReference>
<reference key="1">
    <citation type="submission" date="2008-08" db="EMBL/GenBank/DDBJ databases">
        <title>Complete sequence of Acidithiobacillus ferrooxidans ATCC 53993.</title>
        <authorList>
            <person name="Lucas S."/>
            <person name="Copeland A."/>
            <person name="Lapidus A."/>
            <person name="Glavina del Rio T."/>
            <person name="Dalin E."/>
            <person name="Tice H."/>
            <person name="Bruce D."/>
            <person name="Goodwin L."/>
            <person name="Pitluck S."/>
            <person name="Sims D."/>
            <person name="Brettin T."/>
            <person name="Detter J.C."/>
            <person name="Han C."/>
            <person name="Kuske C.R."/>
            <person name="Larimer F."/>
            <person name="Land M."/>
            <person name="Hauser L."/>
            <person name="Kyrpides N."/>
            <person name="Lykidis A."/>
            <person name="Borole A.P."/>
        </authorList>
    </citation>
    <scope>NUCLEOTIDE SEQUENCE [LARGE SCALE GENOMIC DNA]</scope>
    <source>
        <strain>ATCC 53993 / BNL-5-31</strain>
    </source>
</reference>
<feature type="chain" id="PRO_1000141813" description="Large ribosomal subunit protein uL3">
    <location>
        <begin position="1"/>
        <end position="210"/>
    </location>
</feature>
<feature type="region of interest" description="Disordered" evidence="2">
    <location>
        <begin position="131"/>
        <end position="150"/>
    </location>
</feature>
<feature type="compositionally biased region" description="Polar residues" evidence="2">
    <location>
        <begin position="131"/>
        <end position="140"/>
    </location>
</feature>
<feature type="modified residue" description="N5-methylglutamine" evidence="1">
    <location>
        <position position="151"/>
    </location>
</feature>
<comment type="function">
    <text evidence="1">One of the primary rRNA binding proteins, it binds directly near the 3'-end of the 23S rRNA, where it nucleates assembly of the 50S subunit.</text>
</comment>
<comment type="subunit">
    <text evidence="1">Part of the 50S ribosomal subunit. Forms a cluster with proteins L14 and L19.</text>
</comment>
<comment type="PTM">
    <text evidence="1">Methylated by PrmB.</text>
</comment>
<comment type="similarity">
    <text evidence="1">Belongs to the universal ribosomal protein uL3 family.</text>
</comment>
<keyword id="KW-0488">Methylation</keyword>
<keyword id="KW-0687">Ribonucleoprotein</keyword>
<keyword id="KW-0689">Ribosomal protein</keyword>
<keyword id="KW-0694">RNA-binding</keyword>
<keyword id="KW-0699">rRNA-binding</keyword>
<organism>
    <name type="scientific">Acidithiobacillus ferrooxidans (strain ATCC 53993 / BNL-5-31)</name>
    <name type="common">Leptospirillum ferrooxidans (ATCC 53993)</name>
    <dbReference type="NCBI Taxonomy" id="380394"/>
    <lineage>
        <taxon>Bacteria</taxon>
        <taxon>Pseudomonadati</taxon>
        <taxon>Pseudomonadota</taxon>
        <taxon>Acidithiobacillia</taxon>
        <taxon>Acidithiobacillales</taxon>
        <taxon>Acidithiobacillaceae</taxon>
        <taxon>Acidithiobacillus</taxon>
    </lineage>
</organism>
<gene>
    <name evidence="1" type="primary">rplC</name>
    <name type="ordered locus">Lferr_0497</name>
</gene>
<protein>
    <recommendedName>
        <fullName evidence="1">Large ribosomal subunit protein uL3</fullName>
    </recommendedName>
    <alternativeName>
        <fullName evidence="3">50S ribosomal protein L3</fullName>
    </alternativeName>
</protein>
<name>RL3_ACIF5</name>
<evidence type="ECO:0000255" key="1">
    <source>
        <dbReference type="HAMAP-Rule" id="MF_01325"/>
    </source>
</evidence>
<evidence type="ECO:0000256" key="2">
    <source>
        <dbReference type="SAM" id="MobiDB-lite"/>
    </source>
</evidence>
<evidence type="ECO:0000305" key="3"/>
<proteinExistence type="inferred from homology"/>
<sequence length="210" mass="22387">MVMGLIGRKVGMTRIVAGDGRVLPVTVIHVAPNTVAQVKDIATDGYCAVQVATGTRRPQRVTSALAGHFRKNGIAPGRLLREFRVADTANYACGMDIDLDIFAEGQRVDVSGVSKGKGFAGAIKRHNFRSNRASHGNSLSHRAPGSIGCRQTPGRVFKGKKMAGHLGAEQVTTLNLELVRIDANRRLLMIKGAVPGARDGDVMIRPAVRG</sequence>